<reference key="1">
    <citation type="submission" date="2008-08" db="EMBL/GenBank/DDBJ databases">
        <title>The complete genome sequence of Thermodesulfovibrio yellowstonii strain ATCC 51303 / DSM 11347 / YP87.</title>
        <authorList>
            <person name="Dodson R.J."/>
            <person name="Durkin A.S."/>
            <person name="Wu M."/>
            <person name="Eisen J."/>
            <person name="Sutton G."/>
        </authorList>
    </citation>
    <scope>NUCLEOTIDE SEQUENCE [LARGE SCALE GENOMIC DNA]</scope>
    <source>
        <strain>ATCC 51303 / DSM 11347 / YP87</strain>
    </source>
</reference>
<proteinExistence type="inferred from homology"/>
<comment type="function">
    <text evidence="1">CRISPR (clustered regularly interspaced short palindromic repeat), is an adaptive immune system that provides protection against mobile genetic elements (viruses, transposable elements and conjugative plasmids). CRISPR clusters contain sequences complementary to antecedent mobile elements and target invading nucleic acids. CRISPR clusters are transcribed and processed into CRISPR RNA (crRNA). Functions as a ssRNA-specific endoribonuclease. Involved in the integration of spacer DNA into the CRISPR cassette.</text>
</comment>
<comment type="cofactor">
    <cofactor evidence="1">
        <name>Mg(2+)</name>
        <dbReference type="ChEBI" id="CHEBI:18420"/>
    </cofactor>
</comment>
<comment type="subunit">
    <text evidence="1">Homodimer, forms a heterotetramer with a Cas1 homodimer.</text>
</comment>
<comment type="similarity">
    <text evidence="1">Belongs to the CRISPR-associated endoribonuclease Cas2 protein family.</text>
</comment>
<feature type="chain" id="PRO_0000417736" description="CRISPR-associated endoribonuclease Cas2 2">
    <location>
        <begin position="1"/>
        <end position="91"/>
    </location>
</feature>
<feature type="binding site" evidence="1">
    <location>
        <position position="10"/>
    </location>
    <ligand>
        <name>Mg(2+)</name>
        <dbReference type="ChEBI" id="CHEBI:18420"/>
        <note>catalytic</note>
    </ligand>
</feature>
<organism>
    <name type="scientific">Thermodesulfovibrio yellowstonii (strain ATCC 51303 / DSM 11347 / YP87)</name>
    <dbReference type="NCBI Taxonomy" id="289376"/>
    <lineage>
        <taxon>Bacteria</taxon>
        <taxon>Pseudomonadati</taxon>
        <taxon>Nitrospirota</taxon>
        <taxon>Thermodesulfovibrionia</taxon>
        <taxon>Thermodesulfovibrionales</taxon>
        <taxon>Thermodesulfovibrionaceae</taxon>
        <taxon>Thermodesulfovibrio</taxon>
    </lineage>
</organism>
<accession>B5YJS4</accession>
<gene>
    <name evidence="1" type="primary">cas2-2</name>
    <name type="ordered locus">THEYE_A0646</name>
</gene>
<sequence>MRLPYLVCYDISDEGRLNRVYRFMKGKGFHIQYSVFYCILTDVELKEMKAEILKLIHSRYDDVRIYPLPNNSLVAVLGVGDRIPDGVEVFY</sequence>
<protein>
    <recommendedName>
        <fullName evidence="1">CRISPR-associated endoribonuclease Cas2 2</fullName>
        <ecNumber evidence="1">3.1.-.-</ecNumber>
    </recommendedName>
</protein>
<evidence type="ECO:0000255" key="1">
    <source>
        <dbReference type="HAMAP-Rule" id="MF_01471"/>
    </source>
</evidence>
<dbReference type="EC" id="3.1.-.-" evidence="1"/>
<dbReference type="EMBL" id="CP001147">
    <property type="protein sequence ID" value="ACI21288.1"/>
    <property type="molecule type" value="Genomic_DNA"/>
</dbReference>
<dbReference type="RefSeq" id="WP_012546007.1">
    <property type="nucleotide sequence ID" value="NC_011296.1"/>
</dbReference>
<dbReference type="RefSeq" id="YP_002248489.1">
    <property type="nucleotide sequence ID" value="NC_011296.1"/>
</dbReference>
<dbReference type="SMR" id="B5YJS4"/>
<dbReference type="STRING" id="289376.THEYE_A0646"/>
<dbReference type="EnsemblBacteria" id="ACI21288">
    <property type="protein sequence ID" value="ACI21288"/>
    <property type="gene ID" value="THEYE_A0646"/>
</dbReference>
<dbReference type="KEGG" id="tye:THEYE_A0646"/>
<dbReference type="PATRIC" id="fig|289376.4.peg.640"/>
<dbReference type="eggNOG" id="COG1343">
    <property type="taxonomic scope" value="Bacteria"/>
</dbReference>
<dbReference type="HOGENOM" id="CLU_161124_1_0_0"/>
<dbReference type="InParanoid" id="B5YJS4"/>
<dbReference type="OrthoDB" id="9798176at2"/>
<dbReference type="Proteomes" id="UP000000718">
    <property type="component" value="Chromosome"/>
</dbReference>
<dbReference type="GO" id="GO:0046872">
    <property type="term" value="F:metal ion binding"/>
    <property type="evidence" value="ECO:0007669"/>
    <property type="project" value="UniProtKB-UniRule"/>
</dbReference>
<dbReference type="GO" id="GO:0004521">
    <property type="term" value="F:RNA endonuclease activity"/>
    <property type="evidence" value="ECO:0007669"/>
    <property type="project" value="InterPro"/>
</dbReference>
<dbReference type="GO" id="GO:0051607">
    <property type="term" value="P:defense response to virus"/>
    <property type="evidence" value="ECO:0007669"/>
    <property type="project" value="UniProtKB-UniRule"/>
</dbReference>
<dbReference type="GO" id="GO:0043571">
    <property type="term" value="P:maintenance of CRISPR repeat elements"/>
    <property type="evidence" value="ECO:0007669"/>
    <property type="project" value="UniProtKB-UniRule"/>
</dbReference>
<dbReference type="CDD" id="cd09725">
    <property type="entry name" value="Cas2_I_II_III"/>
    <property type="match status" value="1"/>
</dbReference>
<dbReference type="Gene3D" id="3.30.70.240">
    <property type="match status" value="1"/>
</dbReference>
<dbReference type="HAMAP" id="MF_01471">
    <property type="entry name" value="Cas2"/>
    <property type="match status" value="1"/>
</dbReference>
<dbReference type="InterPro" id="IPR021127">
    <property type="entry name" value="CRISPR_associated_Cas2"/>
</dbReference>
<dbReference type="InterPro" id="IPR019199">
    <property type="entry name" value="Virulence_VapD/CRISPR_Cas2"/>
</dbReference>
<dbReference type="NCBIfam" id="TIGR01573">
    <property type="entry name" value="cas2"/>
    <property type="match status" value="1"/>
</dbReference>
<dbReference type="PANTHER" id="PTHR34405">
    <property type="entry name" value="CRISPR-ASSOCIATED ENDORIBONUCLEASE CAS2"/>
    <property type="match status" value="1"/>
</dbReference>
<dbReference type="PANTHER" id="PTHR34405:SF3">
    <property type="entry name" value="CRISPR-ASSOCIATED ENDORIBONUCLEASE CAS2 3"/>
    <property type="match status" value="1"/>
</dbReference>
<dbReference type="Pfam" id="PF09827">
    <property type="entry name" value="CRISPR_Cas2"/>
    <property type="match status" value="1"/>
</dbReference>
<dbReference type="SUPFAM" id="SSF143430">
    <property type="entry name" value="TTP0101/SSO1404-like"/>
    <property type="match status" value="1"/>
</dbReference>
<name>CAS2B_THEYD</name>
<keyword id="KW-0051">Antiviral defense</keyword>
<keyword id="KW-0255">Endonuclease</keyword>
<keyword id="KW-0378">Hydrolase</keyword>
<keyword id="KW-0460">Magnesium</keyword>
<keyword id="KW-0479">Metal-binding</keyword>
<keyword id="KW-0540">Nuclease</keyword>
<keyword id="KW-1185">Reference proteome</keyword>